<gene>
    <name evidence="1" type="primary">rpsU</name>
    <name type="ordered locus">Dhaf_4292</name>
</gene>
<feature type="chain" id="PRO_1000194288" description="Small ribosomal subunit protein bS21">
    <location>
        <begin position="1"/>
        <end position="58"/>
    </location>
</feature>
<feature type="region of interest" description="Disordered" evidence="2">
    <location>
        <begin position="27"/>
        <end position="58"/>
    </location>
</feature>
<feature type="compositionally biased region" description="Basic and acidic residues" evidence="2">
    <location>
        <begin position="31"/>
        <end position="42"/>
    </location>
</feature>
<feature type="compositionally biased region" description="Basic residues" evidence="2">
    <location>
        <begin position="43"/>
        <end position="58"/>
    </location>
</feature>
<dbReference type="EMBL" id="CP001336">
    <property type="protein sequence ID" value="ACL22297.1"/>
    <property type="molecule type" value="Genomic_DNA"/>
</dbReference>
<dbReference type="RefSeq" id="WP_005816464.1">
    <property type="nucleotide sequence ID" value="NC_011830.1"/>
</dbReference>
<dbReference type="SMR" id="B8FUM7"/>
<dbReference type="KEGG" id="dhd:Dhaf_4292"/>
<dbReference type="HOGENOM" id="CLU_159258_1_2_9"/>
<dbReference type="Proteomes" id="UP000007726">
    <property type="component" value="Chromosome"/>
</dbReference>
<dbReference type="GO" id="GO:1990904">
    <property type="term" value="C:ribonucleoprotein complex"/>
    <property type="evidence" value="ECO:0007669"/>
    <property type="project" value="UniProtKB-KW"/>
</dbReference>
<dbReference type="GO" id="GO:0005840">
    <property type="term" value="C:ribosome"/>
    <property type="evidence" value="ECO:0007669"/>
    <property type="project" value="UniProtKB-KW"/>
</dbReference>
<dbReference type="GO" id="GO:0003735">
    <property type="term" value="F:structural constituent of ribosome"/>
    <property type="evidence" value="ECO:0007669"/>
    <property type="project" value="InterPro"/>
</dbReference>
<dbReference type="GO" id="GO:0006412">
    <property type="term" value="P:translation"/>
    <property type="evidence" value="ECO:0007669"/>
    <property type="project" value="UniProtKB-UniRule"/>
</dbReference>
<dbReference type="Gene3D" id="1.20.5.1150">
    <property type="entry name" value="Ribosomal protein S8"/>
    <property type="match status" value="1"/>
</dbReference>
<dbReference type="HAMAP" id="MF_00358">
    <property type="entry name" value="Ribosomal_bS21"/>
    <property type="match status" value="1"/>
</dbReference>
<dbReference type="InterPro" id="IPR001911">
    <property type="entry name" value="Ribosomal_bS21"/>
</dbReference>
<dbReference type="InterPro" id="IPR018278">
    <property type="entry name" value="Ribosomal_bS21_CS"/>
</dbReference>
<dbReference type="InterPro" id="IPR038380">
    <property type="entry name" value="Ribosomal_bS21_sf"/>
</dbReference>
<dbReference type="NCBIfam" id="TIGR00030">
    <property type="entry name" value="S21p"/>
    <property type="match status" value="1"/>
</dbReference>
<dbReference type="PANTHER" id="PTHR21109">
    <property type="entry name" value="MITOCHONDRIAL 28S RIBOSOMAL PROTEIN S21"/>
    <property type="match status" value="1"/>
</dbReference>
<dbReference type="PANTHER" id="PTHR21109:SF22">
    <property type="entry name" value="SMALL RIBOSOMAL SUBUNIT PROTEIN BS21"/>
    <property type="match status" value="1"/>
</dbReference>
<dbReference type="Pfam" id="PF01165">
    <property type="entry name" value="Ribosomal_S21"/>
    <property type="match status" value="1"/>
</dbReference>
<dbReference type="PRINTS" id="PR00976">
    <property type="entry name" value="RIBOSOMALS21"/>
</dbReference>
<dbReference type="PROSITE" id="PS01181">
    <property type="entry name" value="RIBOSOMAL_S21"/>
    <property type="match status" value="1"/>
</dbReference>
<reference key="1">
    <citation type="journal article" date="2012" name="BMC Microbiol.">
        <title>Genome sequence of Desulfitobacterium hafniense DCB-2, a Gram-positive anaerobe capable of dehalogenation and metal reduction.</title>
        <authorList>
            <person name="Kim S.H."/>
            <person name="Harzman C."/>
            <person name="Davis J.K."/>
            <person name="Hutcheson R."/>
            <person name="Broderick J.B."/>
            <person name="Marsh T.L."/>
            <person name="Tiedje J.M."/>
        </authorList>
    </citation>
    <scope>NUCLEOTIDE SEQUENCE [LARGE SCALE GENOMIC DNA]</scope>
    <source>
        <strain>DSM 10664 / DCB-2</strain>
    </source>
</reference>
<keyword id="KW-0687">Ribonucleoprotein</keyword>
<keyword id="KW-0689">Ribosomal protein</keyword>
<name>RS21_DESHD</name>
<organism>
    <name type="scientific">Desulfitobacterium hafniense (strain DSM 10664 / DCB-2)</name>
    <dbReference type="NCBI Taxonomy" id="272564"/>
    <lineage>
        <taxon>Bacteria</taxon>
        <taxon>Bacillati</taxon>
        <taxon>Bacillota</taxon>
        <taxon>Clostridia</taxon>
        <taxon>Eubacteriales</taxon>
        <taxon>Desulfitobacteriaceae</taxon>
        <taxon>Desulfitobacterium</taxon>
    </lineage>
</organism>
<comment type="similarity">
    <text evidence="1">Belongs to the bacterial ribosomal protein bS21 family.</text>
</comment>
<accession>B8FUM7</accession>
<proteinExistence type="inferred from homology"/>
<evidence type="ECO:0000255" key="1">
    <source>
        <dbReference type="HAMAP-Rule" id="MF_00358"/>
    </source>
</evidence>
<evidence type="ECO:0000256" key="2">
    <source>
        <dbReference type="SAM" id="MobiDB-lite"/>
    </source>
</evidence>
<evidence type="ECO:0000305" key="3"/>
<sequence>MSEIKVGKNESLDSALRRFKRTCQRAGVLSEARKHEHYEKPSVKRKKKSEAARKRKFK</sequence>
<protein>
    <recommendedName>
        <fullName evidence="1">Small ribosomal subunit protein bS21</fullName>
    </recommendedName>
    <alternativeName>
        <fullName evidence="3">30S ribosomal protein S21</fullName>
    </alternativeName>
</protein>